<name>CBIM_METV3</name>
<protein>
    <recommendedName>
        <fullName evidence="1">Putative cobalt transport protein CbiM</fullName>
    </recommendedName>
    <alternativeName>
        <fullName evidence="1">Energy-coupling factor transporter probable substrate-capture protein CbiM</fullName>
        <shortName evidence="1">ECF transporter S component CbiM</shortName>
    </alternativeName>
</protein>
<comment type="function">
    <text evidence="1">Part of the energy-coupling factor (ECF) transporter complex CbiMNOQ involved in cobalt import.</text>
</comment>
<comment type="pathway">
    <text evidence="1">Cofactor biosynthesis; adenosylcobalamin biosynthesis.</text>
</comment>
<comment type="subunit">
    <text evidence="1">Forms an energy-coupling factor (ECF) transporter complex composed of an ATP-binding protein (A component, CbiO), a transmembrane protein (T component, CbiQ) and 2 possible substrate-capture proteins (S components, CbiM and CbiN) of unknown stoichimetry.</text>
</comment>
<comment type="subcellular location">
    <subcellularLocation>
        <location evidence="1">Cell membrane</location>
        <topology evidence="1">Multi-pass membrane protein</topology>
    </subcellularLocation>
</comment>
<comment type="similarity">
    <text evidence="1">Belongs to the CbiM family.</text>
</comment>
<dbReference type="EMBL" id="CP002057">
    <property type="protein sequence ID" value="ADI37277.1"/>
    <property type="molecule type" value="Genomic_DNA"/>
</dbReference>
<dbReference type="SMR" id="D7DR00"/>
<dbReference type="STRING" id="456320.Mvol_1622"/>
<dbReference type="KEGG" id="mvo:Mvol_1622"/>
<dbReference type="eggNOG" id="arCOG02248">
    <property type="taxonomic scope" value="Archaea"/>
</dbReference>
<dbReference type="HOGENOM" id="CLU_052508_3_0_2"/>
<dbReference type="InParanoid" id="D7DR00"/>
<dbReference type="OrthoDB" id="30946at2157"/>
<dbReference type="UniPathway" id="UPA00148"/>
<dbReference type="Proteomes" id="UP000007722">
    <property type="component" value="Chromosome"/>
</dbReference>
<dbReference type="GO" id="GO:0043190">
    <property type="term" value="C:ATP-binding cassette (ABC) transporter complex"/>
    <property type="evidence" value="ECO:0007669"/>
    <property type="project" value="InterPro"/>
</dbReference>
<dbReference type="GO" id="GO:0015087">
    <property type="term" value="F:cobalt ion transmembrane transporter activity"/>
    <property type="evidence" value="ECO:0007669"/>
    <property type="project" value="UniProtKB-UniRule"/>
</dbReference>
<dbReference type="GO" id="GO:0009236">
    <property type="term" value="P:cobalamin biosynthetic process"/>
    <property type="evidence" value="ECO:0007669"/>
    <property type="project" value="UniProtKB-UniRule"/>
</dbReference>
<dbReference type="FunFam" id="1.10.1760.20:FF:000001">
    <property type="entry name" value="Cobalt transport protein CbiM"/>
    <property type="match status" value="1"/>
</dbReference>
<dbReference type="Gene3D" id="1.10.1760.20">
    <property type="match status" value="1"/>
</dbReference>
<dbReference type="HAMAP" id="MF_01462">
    <property type="entry name" value="CbiM"/>
    <property type="match status" value="1"/>
</dbReference>
<dbReference type="InterPro" id="IPR018024">
    <property type="entry name" value="CbiM"/>
</dbReference>
<dbReference type="InterPro" id="IPR002751">
    <property type="entry name" value="CbiM/NikMN"/>
</dbReference>
<dbReference type="NCBIfam" id="TIGR00123">
    <property type="entry name" value="cbiM"/>
    <property type="match status" value="1"/>
</dbReference>
<dbReference type="NCBIfam" id="NF006184">
    <property type="entry name" value="PRK08319.1"/>
    <property type="match status" value="1"/>
</dbReference>
<dbReference type="PANTHER" id="PTHR43627">
    <property type="match status" value="1"/>
</dbReference>
<dbReference type="PANTHER" id="PTHR43627:SF1">
    <property type="entry name" value="COBALT TRANSPORT PROTEIN CBIM"/>
    <property type="match status" value="1"/>
</dbReference>
<dbReference type="Pfam" id="PF01891">
    <property type="entry name" value="CbiM"/>
    <property type="match status" value="1"/>
</dbReference>
<evidence type="ECO:0000255" key="1">
    <source>
        <dbReference type="HAMAP-Rule" id="MF_01462"/>
    </source>
</evidence>
<accession>D7DR00</accession>
<feature type="chain" id="PRO_0000411154" description="Putative cobalt transport protein CbiM">
    <location>
        <begin position="1"/>
        <end position="222"/>
    </location>
</feature>
<feature type="transmembrane region" description="Helical" evidence="1">
    <location>
        <begin position="8"/>
        <end position="28"/>
    </location>
</feature>
<feature type="transmembrane region" description="Helical" evidence="1">
    <location>
        <begin position="43"/>
        <end position="63"/>
    </location>
</feature>
<feature type="transmembrane region" description="Helical" evidence="1">
    <location>
        <begin position="75"/>
        <end position="95"/>
    </location>
</feature>
<feature type="transmembrane region" description="Helical" evidence="1">
    <location>
        <begin position="107"/>
        <end position="127"/>
    </location>
</feature>
<feature type="transmembrane region" description="Helical" evidence="1">
    <location>
        <begin position="134"/>
        <end position="154"/>
    </location>
</feature>
<feature type="transmembrane region" description="Helical" evidence="1">
    <location>
        <begin position="178"/>
        <end position="198"/>
    </location>
</feature>
<proteinExistence type="inferred from homology"/>
<reference key="1">
    <citation type="submission" date="2010-05" db="EMBL/GenBank/DDBJ databases">
        <title>Complete sequence of Methanococcus voltae A3.</title>
        <authorList>
            <consortium name="US DOE Joint Genome Institute"/>
            <person name="Lucas S."/>
            <person name="Copeland A."/>
            <person name="Lapidus A."/>
            <person name="Cheng J.-F."/>
            <person name="Bruce D."/>
            <person name="Goodwin L."/>
            <person name="Pitluck S."/>
            <person name="Lowry S."/>
            <person name="Clum A."/>
            <person name="Land M."/>
            <person name="Hauser L."/>
            <person name="Kyrpides N."/>
            <person name="Mikhailova N."/>
            <person name="Whitman W.B."/>
            <person name="Woyke T."/>
        </authorList>
    </citation>
    <scope>NUCLEOTIDE SEQUENCE [LARGE SCALE GENOMIC DNA]</scope>
    <source>
        <strain>ATCC BAA-1334 / A3</strain>
    </source>
</reference>
<organism>
    <name type="scientific">Methanococcus voltae (strain ATCC BAA-1334 / A3)</name>
    <dbReference type="NCBI Taxonomy" id="456320"/>
    <lineage>
        <taxon>Archaea</taxon>
        <taxon>Methanobacteriati</taxon>
        <taxon>Methanobacteriota</taxon>
        <taxon>Methanomada group</taxon>
        <taxon>Methanococci</taxon>
        <taxon>Methanococcales</taxon>
        <taxon>Methanococcaceae</taxon>
        <taxon>Methanococcus</taxon>
    </lineage>
</organism>
<sequence>MHIMEGYLPMEWAIVWYIISAIVVGYGILNLNKVLKNNPEAKPLLAISGAFMFVLSSLKLPSVSGSCSHPTGNGLGAILFGPAITSVLATIVLLFQALVLAHGGISTLGANIFSMGIMGPFVGYLVFKALRGKLNITWVVMLTAIFADWATYLTTSIQLALAFPVPDFMSSFTEFGTIFAITQIPLAIAEGLITALLWDYLSELRPELFEKITNIKKGGNNE</sequence>
<keyword id="KW-1003">Cell membrane</keyword>
<keyword id="KW-0169">Cobalamin biosynthesis</keyword>
<keyword id="KW-0170">Cobalt</keyword>
<keyword id="KW-0171">Cobalt transport</keyword>
<keyword id="KW-0406">Ion transport</keyword>
<keyword id="KW-0472">Membrane</keyword>
<keyword id="KW-1185">Reference proteome</keyword>
<keyword id="KW-0812">Transmembrane</keyword>
<keyword id="KW-1133">Transmembrane helix</keyword>
<keyword id="KW-0813">Transport</keyword>
<gene>
    <name evidence="1" type="primary">cbiM</name>
    <name type="ordered locus">Mvol_1622</name>
</gene>